<comment type="function">
    <text evidence="1">The glycine cleavage system catalyzes the degradation of glycine.</text>
</comment>
<comment type="catalytic activity">
    <reaction evidence="1">
        <text>N(6)-[(R)-S(8)-aminomethyldihydrolipoyl]-L-lysyl-[protein] + (6S)-5,6,7,8-tetrahydrofolate = N(6)-[(R)-dihydrolipoyl]-L-lysyl-[protein] + (6R)-5,10-methylene-5,6,7,8-tetrahydrofolate + NH4(+)</text>
        <dbReference type="Rhea" id="RHEA:16945"/>
        <dbReference type="Rhea" id="RHEA-COMP:10475"/>
        <dbReference type="Rhea" id="RHEA-COMP:10492"/>
        <dbReference type="ChEBI" id="CHEBI:15636"/>
        <dbReference type="ChEBI" id="CHEBI:28938"/>
        <dbReference type="ChEBI" id="CHEBI:57453"/>
        <dbReference type="ChEBI" id="CHEBI:83100"/>
        <dbReference type="ChEBI" id="CHEBI:83143"/>
        <dbReference type="EC" id="2.1.2.10"/>
    </reaction>
</comment>
<comment type="subunit">
    <text evidence="1">The glycine cleavage system is composed of four proteins: P, T, L and H.</text>
</comment>
<comment type="similarity">
    <text evidence="1">Belongs to the GcvT family.</text>
</comment>
<sequence>MLQRTPLFPLYAEYGAKTIDFGGWELPVQFSSIKEEHEAVRTRAGLFDVSHMGEFEVKGKDSVAFLQKMMTNDVAKLTDGRAQYTLMCYEDGGTVDDLLVYKKADDHYLLVVNAANIEKDFAWLSEHVVGDVELVNISNDIAQLALQGPLAEKVLQQLTTVDLSTMKFFAFADHVDVAGVQTLVSRTGYTGEDGFELYCRAEDAPTLWRAILEAGKEEGVLPCGLGARDTLRFEACLPLYGQELAKDITPIEAGLGFAVKTNKDVDFFGKEILKKQKEEGAPRRLVGIEMIDKGIARHGYAVYVNNEQIGFVTTGTQSPTLKKNIGLALISTAFSSLDTEVEVDVRGKRLKARVVATPFYKRTK</sequence>
<gene>
    <name evidence="1" type="primary">gcvT</name>
    <name type="ordered locus">Aflv_0915</name>
</gene>
<protein>
    <recommendedName>
        <fullName evidence="1">Aminomethyltransferase</fullName>
        <ecNumber evidence="1">2.1.2.10</ecNumber>
    </recommendedName>
    <alternativeName>
        <fullName evidence="1">Glycine cleavage system T protein</fullName>
    </alternativeName>
</protein>
<reference key="1">
    <citation type="journal article" date="2008" name="Genome Biol.">
        <title>Encapsulated in silica: genome, proteome and physiology of the thermophilic bacterium Anoxybacillus flavithermus WK1.</title>
        <authorList>
            <person name="Saw J.H."/>
            <person name="Mountain B.W."/>
            <person name="Feng L."/>
            <person name="Omelchenko M.V."/>
            <person name="Hou S."/>
            <person name="Saito J.A."/>
            <person name="Stott M.B."/>
            <person name="Li D."/>
            <person name="Zhao G."/>
            <person name="Wu J."/>
            <person name="Galperin M.Y."/>
            <person name="Koonin E.V."/>
            <person name="Makarova K.S."/>
            <person name="Wolf Y.I."/>
            <person name="Rigden D.J."/>
            <person name="Dunfield P.F."/>
            <person name="Wang L."/>
            <person name="Alam M."/>
        </authorList>
    </citation>
    <scope>NUCLEOTIDE SEQUENCE [LARGE SCALE GENOMIC DNA]</scope>
    <source>
        <strain>DSM 21510 / WK1</strain>
    </source>
</reference>
<accession>B7GH71</accession>
<evidence type="ECO:0000255" key="1">
    <source>
        <dbReference type="HAMAP-Rule" id="MF_00259"/>
    </source>
</evidence>
<name>GCST_ANOFW</name>
<organism>
    <name type="scientific">Anoxybacillus flavithermus (strain DSM 21510 / WK1)</name>
    <dbReference type="NCBI Taxonomy" id="491915"/>
    <lineage>
        <taxon>Bacteria</taxon>
        <taxon>Bacillati</taxon>
        <taxon>Bacillota</taxon>
        <taxon>Bacilli</taxon>
        <taxon>Bacillales</taxon>
        <taxon>Anoxybacillaceae</taxon>
        <taxon>Anoxybacillus</taxon>
    </lineage>
</organism>
<feature type="chain" id="PRO_1000119192" description="Aminomethyltransferase">
    <location>
        <begin position="1"/>
        <end position="364"/>
    </location>
</feature>
<proteinExistence type="inferred from homology"/>
<keyword id="KW-0032">Aminotransferase</keyword>
<keyword id="KW-0808">Transferase</keyword>
<dbReference type="EC" id="2.1.2.10" evidence="1"/>
<dbReference type="EMBL" id="CP000922">
    <property type="protein sequence ID" value="ACJ33293.1"/>
    <property type="molecule type" value="Genomic_DNA"/>
</dbReference>
<dbReference type="RefSeq" id="WP_012574576.1">
    <property type="nucleotide sequence ID" value="NC_011567.1"/>
</dbReference>
<dbReference type="SMR" id="B7GH71"/>
<dbReference type="STRING" id="491915.Aflv_0915"/>
<dbReference type="GeneID" id="7037173"/>
<dbReference type="KEGG" id="afl:Aflv_0915"/>
<dbReference type="PATRIC" id="fig|491915.6.peg.935"/>
<dbReference type="eggNOG" id="COG0404">
    <property type="taxonomic scope" value="Bacteria"/>
</dbReference>
<dbReference type="HOGENOM" id="CLU_007884_10_2_9"/>
<dbReference type="Proteomes" id="UP000000742">
    <property type="component" value="Chromosome"/>
</dbReference>
<dbReference type="GO" id="GO:0005829">
    <property type="term" value="C:cytosol"/>
    <property type="evidence" value="ECO:0007669"/>
    <property type="project" value="TreeGrafter"/>
</dbReference>
<dbReference type="GO" id="GO:0005960">
    <property type="term" value="C:glycine cleavage complex"/>
    <property type="evidence" value="ECO:0007669"/>
    <property type="project" value="InterPro"/>
</dbReference>
<dbReference type="GO" id="GO:0004047">
    <property type="term" value="F:aminomethyltransferase activity"/>
    <property type="evidence" value="ECO:0007669"/>
    <property type="project" value="UniProtKB-UniRule"/>
</dbReference>
<dbReference type="GO" id="GO:0008483">
    <property type="term" value="F:transaminase activity"/>
    <property type="evidence" value="ECO:0007669"/>
    <property type="project" value="UniProtKB-KW"/>
</dbReference>
<dbReference type="GO" id="GO:0019464">
    <property type="term" value="P:glycine decarboxylation via glycine cleavage system"/>
    <property type="evidence" value="ECO:0007669"/>
    <property type="project" value="UniProtKB-UniRule"/>
</dbReference>
<dbReference type="FunFam" id="2.40.30.110:FF:000003">
    <property type="entry name" value="Aminomethyltransferase"/>
    <property type="match status" value="1"/>
</dbReference>
<dbReference type="FunFam" id="3.30.70.1400:FF:000001">
    <property type="entry name" value="Aminomethyltransferase"/>
    <property type="match status" value="1"/>
</dbReference>
<dbReference type="FunFam" id="4.10.1250.10:FF:000001">
    <property type="entry name" value="Aminomethyltransferase"/>
    <property type="match status" value="1"/>
</dbReference>
<dbReference type="Gene3D" id="2.40.30.110">
    <property type="entry name" value="Aminomethyltransferase beta-barrel domains"/>
    <property type="match status" value="1"/>
</dbReference>
<dbReference type="Gene3D" id="3.30.70.1400">
    <property type="entry name" value="Aminomethyltransferase beta-barrel domains"/>
    <property type="match status" value="1"/>
</dbReference>
<dbReference type="Gene3D" id="4.10.1250.10">
    <property type="entry name" value="Aminomethyltransferase fragment"/>
    <property type="match status" value="1"/>
</dbReference>
<dbReference type="Gene3D" id="3.30.1360.120">
    <property type="entry name" value="Probable tRNA modification gtpase trme, domain 1"/>
    <property type="match status" value="1"/>
</dbReference>
<dbReference type="HAMAP" id="MF_00259">
    <property type="entry name" value="GcvT"/>
    <property type="match status" value="1"/>
</dbReference>
<dbReference type="InterPro" id="IPR006223">
    <property type="entry name" value="GCS_T"/>
</dbReference>
<dbReference type="InterPro" id="IPR022903">
    <property type="entry name" value="GCS_T_bac"/>
</dbReference>
<dbReference type="InterPro" id="IPR013977">
    <property type="entry name" value="GCST_C"/>
</dbReference>
<dbReference type="InterPro" id="IPR006222">
    <property type="entry name" value="GCV_T_N"/>
</dbReference>
<dbReference type="InterPro" id="IPR028896">
    <property type="entry name" value="GcvT/YgfZ/DmdA"/>
</dbReference>
<dbReference type="InterPro" id="IPR029043">
    <property type="entry name" value="GcvT/YgfZ_C"/>
</dbReference>
<dbReference type="InterPro" id="IPR027266">
    <property type="entry name" value="TrmE/GcvT_dom1"/>
</dbReference>
<dbReference type="NCBIfam" id="TIGR00528">
    <property type="entry name" value="gcvT"/>
    <property type="match status" value="1"/>
</dbReference>
<dbReference type="NCBIfam" id="NF001567">
    <property type="entry name" value="PRK00389.1"/>
    <property type="match status" value="1"/>
</dbReference>
<dbReference type="PANTHER" id="PTHR43757">
    <property type="entry name" value="AMINOMETHYLTRANSFERASE"/>
    <property type="match status" value="1"/>
</dbReference>
<dbReference type="PANTHER" id="PTHR43757:SF2">
    <property type="entry name" value="AMINOMETHYLTRANSFERASE, MITOCHONDRIAL"/>
    <property type="match status" value="1"/>
</dbReference>
<dbReference type="Pfam" id="PF01571">
    <property type="entry name" value="GCV_T"/>
    <property type="match status" value="1"/>
</dbReference>
<dbReference type="Pfam" id="PF08669">
    <property type="entry name" value="GCV_T_C"/>
    <property type="match status" value="1"/>
</dbReference>
<dbReference type="PIRSF" id="PIRSF006487">
    <property type="entry name" value="GcvT"/>
    <property type="match status" value="1"/>
</dbReference>
<dbReference type="SUPFAM" id="SSF101790">
    <property type="entry name" value="Aminomethyltransferase beta-barrel domain"/>
    <property type="match status" value="1"/>
</dbReference>
<dbReference type="SUPFAM" id="SSF103025">
    <property type="entry name" value="Folate-binding domain"/>
    <property type="match status" value="1"/>
</dbReference>